<proteinExistence type="inferred from homology"/>
<feature type="chain" id="PRO_1000137863" description="tRNA(Ile)-lysidine synthase">
    <location>
        <begin position="1"/>
        <end position="448"/>
    </location>
</feature>
<feature type="binding site" evidence="1">
    <location>
        <begin position="29"/>
        <end position="34"/>
    </location>
    <ligand>
        <name>ATP</name>
        <dbReference type="ChEBI" id="CHEBI:30616"/>
    </ligand>
</feature>
<comment type="function">
    <text evidence="1">Ligates lysine onto the cytidine present at position 34 of the AUA codon-specific tRNA(Ile) that contains the anticodon CAU, in an ATP-dependent manner. Cytidine is converted to lysidine, thus changing the amino acid specificity of the tRNA from methionine to isoleucine.</text>
</comment>
<comment type="catalytic activity">
    <reaction evidence="1">
        <text>cytidine(34) in tRNA(Ile2) + L-lysine + ATP = lysidine(34) in tRNA(Ile2) + AMP + diphosphate + H(+)</text>
        <dbReference type="Rhea" id="RHEA:43744"/>
        <dbReference type="Rhea" id="RHEA-COMP:10625"/>
        <dbReference type="Rhea" id="RHEA-COMP:10670"/>
        <dbReference type="ChEBI" id="CHEBI:15378"/>
        <dbReference type="ChEBI" id="CHEBI:30616"/>
        <dbReference type="ChEBI" id="CHEBI:32551"/>
        <dbReference type="ChEBI" id="CHEBI:33019"/>
        <dbReference type="ChEBI" id="CHEBI:82748"/>
        <dbReference type="ChEBI" id="CHEBI:83665"/>
        <dbReference type="ChEBI" id="CHEBI:456215"/>
        <dbReference type="EC" id="6.3.4.19"/>
    </reaction>
</comment>
<comment type="subcellular location">
    <subcellularLocation>
        <location evidence="1">Cytoplasm</location>
    </subcellularLocation>
</comment>
<comment type="domain">
    <text>The N-terminal region contains the highly conserved SGGXDS motif, predicted to be a P-loop motif involved in ATP binding.</text>
</comment>
<comment type="similarity">
    <text evidence="1">Belongs to the tRNA(Ile)-lysidine synthase family.</text>
</comment>
<keyword id="KW-0067">ATP-binding</keyword>
<keyword id="KW-0963">Cytoplasm</keyword>
<keyword id="KW-0436">Ligase</keyword>
<keyword id="KW-0547">Nucleotide-binding</keyword>
<keyword id="KW-1185">Reference proteome</keyword>
<keyword id="KW-0819">tRNA processing</keyword>
<name>TILS_AZOSB</name>
<protein>
    <recommendedName>
        <fullName evidence="1">tRNA(Ile)-lysidine synthase</fullName>
        <ecNumber evidence="1">6.3.4.19</ecNumber>
    </recommendedName>
    <alternativeName>
        <fullName evidence="1">tRNA(Ile)-2-lysyl-cytidine synthase</fullName>
    </alternativeName>
    <alternativeName>
        <fullName evidence="1">tRNA(Ile)-lysidine synthetase</fullName>
    </alternativeName>
</protein>
<sequence length="448" mass="47756">MAVELAGPFAEVLRAAAIGPASRLCCALSGGVDSVVTLDLLTRLQPRFGFTLTAVHVHHGLSPHADAWAQFCARLCAARGLTLAIRRVEVPTDTGQGLESAARARRHAELVALPCDWLVFGHHQDDQAETVLFRLFRGSGLRGLGAMAAVEPGQHAMPGKLRPLLDIGRAGIVAYARAAGLEWIEDESNADCRFTRNALRHKVLPVVQAQFPAVAPTLARTAALLREGADLLDDLARLDENACGGPVLAADVFASLPAARAANLLRWQTARMGARAPSRARLGETLRQLREAPGPLRLPLGDLWCCAYQGRVWLERDDEAPLRAHLWCGESSLGWGAGQVRLSQGGGGAALRVAAGEAMLAPPAPGLRMRLGPGRPTRSFKNLCQEAGIPPWLRPRLPVLWVAGEPAWIGGIGIAAQFQCAEGEQGVVPAWVPASAAQQGQHLGQFDR</sequence>
<organism>
    <name type="scientific">Azoarcus sp. (strain BH72)</name>
    <dbReference type="NCBI Taxonomy" id="418699"/>
    <lineage>
        <taxon>Bacteria</taxon>
        <taxon>Pseudomonadati</taxon>
        <taxon>Pseudomonadota</taxon>
        <taxon>Betaproteobacteria</taxon>
        <taxon>Rhodocyclales</taxon>
        <taxon>Zoogloeaceae</taxon>
        <taxon>Azoarcus</taxon>
    </lineage>
</organism>
<gene>
    <name evidence="1" type="primary">tilS</name>
    <name type="ordered locus">azo0916</name>
</gene>
<accession>A1K3X8</accession>
<dbReference type="EC" id="6.3.4.19" evidence="1"/>
<dbReference type="EMBL" id="AM406670">
    <property type="protein sequence ID" value="CAL93533.1"/>
    <property type="molecule type" value="Genomic_DNA"/>
</dbReference>
<dbReference type="RefSeq" id="WP_011764650.1">
    <property type="nucleotide sequence ID" value="NC_008702.1"/>
</dbReference>
<dbReference type="SMR" id="A1K3X8"/>
<dbReference type="STRING" id="62928.azo0916"/>
<dbReference type="KEGG" id="azo:azo0916"/>
<dbReference type="eggNOG" id="COG0037">
    <property type="taxonomic scope" value="Bacteria"/>
</dbReference>
<dbReference type="HOGENOM" id="CLU_018869_2_0_4"/>
<dbReference type="Proteomes" id="UP000002588">
    <property type="component" value="Chromosome"/>
</dbReference>
<dbReference type="GO" id="GO:0005737">
    <property type="term" value="C:cytoplasm"/>
    <property type="evidence" value="ECO:0007669"/>
    <property type="project" value="UniProtKB-SubCell"/>
</dbReference>
<dbReference type="GO" id="GO:0005524">
    <property type="term" value="F:ATP binding"/>
    <property type="evidence" value="ECO:0007669"/>
    <property type="project" value="UniProtKB-UniRule"/>
</dbReference>
<dbReference type="GO" id="GO:0032267">
    <property type="term" value="F:tRNA(Ile)-lysidine synthase activity"/>
    <property type="evidence" value="ECO:0007669"/>
    <property type="project" value="UniProtKB-EC"/>
</dbReference>
<dbReference type="GO" id="GO:0006400">
    <property type="term" value="P:tRNA modification"/>
    <property type="evidence" value="ECO:0007669"/>
    <property type="project" value="UniProtKB-UniRule"/>
</dbReference>
<dbReference type="CDD" id="cd01992">
    <property type="entry name" value="TilS_N"/>
    <property type="match status" value="1"/>
</dbReference>
<dbReference type="Gene3D" id="1.20.59.20">
    <property type="match status" value="1"/>
</dbReference>
<dbReference type="Gene3D" id="3.40.50.620">
    <property type="entry name" value="HUPs"/>
    <property type="match status" value="1"/>
</dbReference>
<dbReference type="HAMAP" id="MF_01161">
    <property type="entry name" value="tRNA_Ile_lys_synt"/>
    <property type="match status" value="1"/>
</dbReference>
<dbReference type="InterPro" id="IPR012796">
    <property type="entry name" value="Lysidine-tRNA-synth_C"/>
</dbReference>
<dbReference type="InterPro" id="IPR014729">
    <property type="entry name" value="Rossmann-like_a/b/a_fold"/>
</dbReference>
<dbReference type="InterPro" id="IPR011063">
    <property type="entry name" value="TilS/TtcA_N"/>
</dbReference>
<dbReference type="InterPro" id="IPR012094">
    <property type="entry name" value="tRNA_Ile_lys_synt"/>
</dbReference>
<dbReference type="InterPro" id="IPR012795">
    <property type="entry name" value="tRNA_Ile_lys_synt_N"/>
</dbReference>
<dbReference type="InterPro" id="IPR015262">
    <property type="entry name" value="tRNA_Ile_lys_synt_subst-bd"/>
</dbReference>
<dbReference type="NCBIfam" id="TIGR02433">
    <property type="entry name" value="lysidine_TilS_C"/>
    <property type="match status" value="1"/>
</dbReference>
<dbReference type="NCBIfam" id="TIGR02432">
    <property type="entry name" value="lysidine_TilS_N"/>
    <property type="match status" value="1"/>
</dbReference>
<dbReference type="PANTHER" id="PTHR43033">
    <property type="entry name" value="TRNA(ILE)-LYSIDINE SYNTHASE-RELATED"/>
    <property type="match status" value="1"/>
</dbReference>
<dbReference type="PANTHER" id="PTHR43033:SF1">
    <property type="entry name" value="TRNA(ILE)-LYSIDINE SYNTHASE-RELATED"/>
    <property type="match status" value="1"/>
</dbReference>
<dbReference type="Pfam" id="PF01171">
    <property type="entry name" value="ATP_bind_3"/>
    <property type="match status" value="1"/>
</dbReference>
<dbReference type="Pfam" id="PF09179">
    <property type="entry name" value="TilS"/>
    <property type="match status" value="1"/>
</dbReference>
<dbReference type="Pfam" id="PF11734">
    <property type="entry name" value="TilS_C"/>
    <property type="match status" value="1"/>
</dbReference>
<dbReference type="SMART" id="SM00977">
    <property type="entry name" value="TilS_C"/>
    <property type="match status" value="1"/>
</dbReference>
<dbReference type="SUPFAM" id="SSF52402">
    <property type="entry name" value="Adenine nucleotide alpha hydrolases-like"/>
    <property type="match status" value="1"/>
</dbReference>
<dbReference type="SUPFAM" id="SSF82829">
    <property type="entry name" value="MesJ substrate recognition domain-like"/>
    <property type="match status" value="1"/>
</dbReference>
<dbReference type="SUPFAM" id="SSF56037">
    <property type="entry name" value="PheT/TilS domain"/>
    <property type="match status" value="1"/>
</dbReference>
<reference key="1">
    <citation type="journal article" date="2006" name="Nat. Biotechnol.">
        <title>Complete genome of the mutualistic, N2-fixing grass endophyte Azoarcus sp. strain BH72.</title>
        <authorList>
            <person name="Krause A."/>
            <person name="Ramakumar A."/>
            <person name="Bartels D."/>
            <person name="Battistoni F."/>
            <person name="Bekel T."/>
            <person name="Boch J."/>
            <person name="Boehm M."/>
            <person name="Friedrich F."/>
            <person name="Hurek T."/>
            <person name="Krause L."/>
            <person name="Linke B."/>
            <person name="McHardy A.C."/>
            <person name="Sarkar A."/>
            <person name="Schneiker S."/>
            <person name="Syed A.A."/>
            <person name="Thauer R."/>
            <person name="Vorhoelter F.-J."/>
            <person name="Weidner S."/>
            <person name="Puehler A."/>
            <person name="Reinhold-Hurek B."/>
            <person name="Kaiser O."/>
            <person name="Goesmann A."/>
        </authorList>
    </citation>
    <scope>NUCLEOTIDE SEQUENCE [LARGE SCALE GENOMIC DNA]</scope>
    <source>
        <strain>BH72</strain>
    </source>
</reference>
<evidence type="ECO:0000255" key="1">
    <source>
        <dbReference type="HAMAP-Rule" id="MF_01161"/>
    </source>
</evidence>